<proteinExistence type="inferred from homology"/>
<accession>C0ZAQ1</accession>
<organism>
    <name type="scientific">Brevibacillus brevis (strain 47 / JCM 6285 / NBRC 100599)</name>
    <dbReference type="NCBI Taxonomy" id="358681"/>
    <lineage>
        <taxon>Bacteria</taxon>
        <taxon>Bacillati</taxon>
        <taxon>Bacillota</taxon>
        <taxon>Bacilli</taxon>
        <taxon>Bacillales</taxon>
        <taxon>Paenibacillaceae</taxon>
        <taxon>Brevibacillus</taxon>
    </lineage>
</organism>
<keyword id="KW-0963">Cytoplasm</keyword>
<keyword id="KW-0378">Hydrolase</keyword>
<keyword id="KW-1185">Reference proteome</keyword>
<keyword id="KW-0694">RNA-binding</keyword>
<keyword id="KW-0820">tRNA-binding</keyword>
<gene>
    <name evidence="1" type="primary">dtd</name>
    <name type="ordered locus">BBR47_18830</name>
</gene>
<protein>
    <recommendedName>
        <fullName evidence="1">D-aminoacyl-tRNA deacylase</fullName>
        <shortName evidence="1">DTD</shortName>
        <ecNumber evidence="1">3.1.1.96</ecNumber>
    </recommendedName>
    <alternativeName>
        <fullName evidence="1">Gly-tRNA(Ala) deacylase</fullName>
    </alternativeName>
</protein>
<comment type="function">
    <text evidence="1">An aminoacyl-tRNA editing enzyme that deacylates mischarged D-aminoacyl-tRNAs. Also deacylates mischarged glycyl-tRNA(Ala), protecting cells against glycine mischarging by AlaRS. Acts via tRNA-based rather than protein-based catalysis; rejects L-amino acids rather than detecting D-amino acids in the active site. By recycling D-aminoacyl-tRNA to D-amino acids and free tRNA molecules, this enzyme counteracts the toxicity associated with the formation of D-aminoacyl-tRNA entities in vivo and helps enforce protein L-homochirality.</text>
</comment>
<comment type="catalytic activity">
    <reaction evidence="1">
        <text>glycyl-tRNA(Ala) + H2O = tRNA(Ala) + glycine + H(+)</text>
        <dbReference type="Rhea" id="RHEA:53744"/>
        <dbReference type="Rhea" id="RHEA-COMP:9657"/>
        <dbReference type="Rhea" id="RHEA-COMP:13640"/>
        <dbReference type="ChEBI" id="CHEBI:15377"/>
        <dbReference type="ChEBI" id="CHEBI:15378"/>
        <dbReference type="ChEBI" id="CHEBI:57305"/>
        <dbReference type="ChEBI" id="CHEBI:78442"/>
        <dbReference type="ChEBI" id="CHEBI:78522"/>
        <dbReference type="EC" id="3.1.1.96"/>
    </reaction>
</comment>
<comment type="catalytic activity">
    <reaction evidence="1">
        <text>a D-aminoacyl-tRNA + H2O = a tRNA + a D-alpha-amino acid + H(+)</text>
        <dbReference type="Rhea" id="RHEA:13953"/>
        <dbReference type="Rhea" id="RHEA-COMP:10123"/>
        <dbReference type="Rhea" id="RHEA-COMP:10124"/>
        <dbReference type="ChEBI" id="CHEBI:15377"/>
        <dbReference type="ChEBI" id="CHEBI:15378"/>
        <dbReference type="ChEBI" id="CHEBI:59871"/>
        <dbReference type="ChEBI" id="CHEBI:78442"/>
        <dbReference type="ChEBI" id="CHEBI:79333"/>
        <dbReference type="EC" id="3.1.1.96"/>
    </reaction>
</comment>
<comment type="subunit">
    <text evidence="1">Homodimer.</text>
</comment>
<comment type="subcellular location">
    <subcellularLocation>
        <location evidence="1">Cytoplasm</location>
    </subcellularLocation>
</comment>
<comment type="domain">
    <text evidence="1">A Gly-cisPro motif from one monomer fits into the active site of the other monomer to allow specific chiral rejection of L-amino acids.</text>
</comment>
<comment type="similarity">
    <text evidence="1">Belongs to the DTD family.</text>
</comment>
<evidence type="ECO:0000255" key="1">
    <source>
        <dbReference type="HAMAP-Rule" id="MF_00518"/>
    </source>
</evidence>
<name>DTD_BREBN</name>
<feature type="chain" id="PRO_1000146186" description="D-aminoacyl-tRNA deacylase">
    <location>
        <begin position="1"/>
        <end position="145"/>
    </location>
</feature>
<feature type="short sequence motif" description="Gly-cisPro motif, important for rejection of L-amino acids" evidence="1">
    <location>
        <begin position="137"/>
        <end position="138"/>
    </location>
</feature>
<dbReference type="EC" id="3.1.1.96" evidence="1"/>
<dbReference type="EMBL" id="AP008955">
    <property type="protein sequence ID" value="BAH42860.1"/>
    <property type="molecule type" value="Genomic_DNA"/>
</dbReference>
<dbReference type="RefSeq" id="WP_012685598.1">
    <property type="nucleotide sequence ID" value="NC_012491.1"/>
</dbReference>
<dbReference type="SMR" id="C0ZAQ1"/>
<dbReference type="STRING" id="358681.BBR47_18830"/>
<dbReference type="KEGG" id="bbe:BBR47_18830"/>
<dbReference type="eggNOG" id="COG1490">
    <property type="taxonomic scope" value="Bacteria"/>
</dbReference>
<dbReference type="HOGENOM" id="CLU_076901_1_0_9"/>
<dbReference type="Proteomes" id="UP000001877">
    <property type="component" value="Chromosome"/>
</dbReference>
<dbReference type="GO" id="GO:0005737">
    <property type="term" value="C:cytoplasm"/>
    <property type="evidence" value="ECO:0007669"/>
    <property type="project" value="UniProtKB-SubCell"/>
</dbReference>
<dbReference type="GO" id="GO:0051500">
    <property type="term" value="F:D-tyrosyl-tRNA(Tyr) deacylase activity"/>
    <property type="evidence" value="ECO:0007669"/>
    <property type="project" value="TreeGrafter"/>
</dbReference>
<dbReference type="GO" id="GO:0106026">
    <property type="term" value="F:Gly-tRNA(Ala) deacylase activity"/>
    <property type="evidence" value="ECO:0007669"/>
    <property type="project" value="UniProtKB-UniRule"/>
</dbReference>
<dbReference type="GO" id="GO:0043908">
    <property type="term" value="F:Ser(Gly)-tRNA(Ala) hydrolase activity"/>
    <property type="evidence" value="ECO:0007669"/>
    <property type="project" value="UniProtKB-UniRule"/>
</dbReference>
<dbReference type="GO" id="GO:0000049">
    <property type="term" value="F:tRNA binding"/>
    <property type="evidence" value="ECO:0007669"/>
    <property type="project" value="UniProtKB-UniRule"/>
</dbReference>
<dbReference type="GO" id="GO:0019478">
    <property type="term" value="P:D-amino acid catabolic process"/>
    <property type="evidence" value="ECO:0007669"/>
    <property type="project" value="UniProtKB-UniRule"/>
</dbReference>
<dbReference type="CDD" id="cd00563">
    <property type="entry name" value="Dtyr_deacylase"/>
    <property type="match status" value="1"/>
</dbReference>
<dbReference type="FunFam" id="3.50.80.10:FF:000001">
    <property type="entry name" value="D-aminoacyl-tRNA deacylase"/>
    <property type="match status" value="1"/>
</dbReference>
<dbReference type="Gene3D" id="3.50.80.10">
    <property type="entry name" value="D-tyrosyl-tRNA(Tyr) deacylase"/>
    <property type="match status" value="1"/>
</dbReference>
<dbReference type="HAMAP" id="MF_00518">
    <property type="entry name" value="Deacylase_Dtd"/>
    <property type="match status" value="1"/>
</dbReference>
<dbReference type="InterPro" id="IPR003732">
    <property type="entry name" value="Daa-tRNA_deacyls_DTD"/>
</dbReference>
<dbReference type="InterPro" id="IPR023509">
    <property type="entry name" value="DTD-like_sf"/>
</dbReference>
<dbReference type="NCBIfam" id="TIGR00256">
    <property type="entry name" value="D-aminoacyl-tRNA deacylase"/>
    <property type="match status" value="1"/>
</dbReference>
<dbReference type="PANTHER" id="PTHR10472:SF5">
    <property type="entry name" value="D-AMINOACYL-TRNA DEACYLASE 1"/>
    <property type="match status" value="1"/>
</dbReference>
<dbReference type="PANTHER" id="PTHR10472">
    <property type="entry name" value="D-TYROSYL-TRNA TYR DEACYLASE"/>
    <property type="match status" value="1"/>
</dbReference>
<dbReference type="Pfam" id="PF02580">
    <property type="entry name" value="Tyr_Deacylase"/>
    <property type="match status" value="1"/>
</dbReference>
<dbReference type="SUPFAM" id="SSF69500">
    <property type="entry name" value="DTD-like"/>
    <property type="match status" value="1"/>
</dbReference>
<sequence length="145" mass="16215">MRVVVQRTREASVTVAGEVVGQIDHGLMLLVGITHEDTEKEVEFVADKIANLRIFEDEEGKMNFSVLDKGGQILSVSQFTLYGDCRKGRRPNFMAAARPEQAEPLYELFNTKLREKGLQVETGRFGAMMDVRLLNDGPVTLIVES</sequence>
<reference key="1">
    <citation type="submission" date="2005-03" db="EMBL/GenBank/DDBJ databases">
        <title>Brevibacillus brevis strain 47, complete genome.</title>
        <authorList>
            <person name="Hosoyama A."/>
            <person name="Yamada R."/>
            <person name="Hongo Y."/>
            <person name="Terui Y."/>
            <person name="Ankai A."/>
            <person name="Masuyama W."/>
            <person name="Sekiguchi M."/>
            <person name="Takeda T."/>
            <person name="Asano K."/>
            <person name="Ohji S."/>
            <person name="Ichikawa N."/>
            <person name="Narita S."/>
            <person name="Aoki N."/>
            <person name="Miura H."/>
            <person name="Matsushita S."/>
            <person name="Sekigawa T."/>
            <person name="Yamagata H."/>
            <person name="Yoshikawa H."/>
            <person name="Udaka S."/>
            <person name="Tanikawa S."/>
            <person name="Fujita N."/>
        </authorList>
    </citation>
    <scope>NUCLEOTIDE SEQUENCE [LARGE SCALE GENOMIC DNA]</scope>
    <source>
        <strain>47 / JCM 6285 / NBRC 100599</strain>
    </source>
</reference>